<sequence length="88" mass="10049">MKEGIHPDYREVLFIDVSNDFKFVTRSTIQTRETAEFEGKTYPLAKIEVSSESHPFYTGQQKIMDTAGRVEKFRNKFGSRATGKVAAK</sequence>
<protein>
    <recommendedName>
        <fullName evidence="1">Large ribosomal subunit protein bL31B</fullName>
    </recommendedName>
    <alternativeName>
        <fullName evidence="2">50S ribosomal protein L31 type B</fullName>
    </alternativeName>
</protein>
<reference key="1">
    <citation type="journal article" date="2006" name="Proc. Natl. Acad. Sci. U.S.A.">
        <title>Burkholderia xenovorans LB400 harbors a multi-replicon, 9.73-Mbp genome shaped for versatility.</title>
        <authorList>
            <person name="Chain P.S.G."/>
            <person name="Denef V.J."/>
            <person name="Konstantinidis K.T."/>
            <person name="Vergez L.M."/>
            <person name="Agullo L."/>
            <person name="Reyes V.L."/>
            <person name="Hauser L."/>
            <person name="Cordova M."/>
            <person name="Gomez L."/>
            <person name="Gonzalez M."/>
            <person name="Land M."/>
            <person name="Lao V."/>
            <person name="Larimer F."/>
            <person name="LiPuma J.J."/>
            <person name="Mahenthiralingam E."/>
            <person name="Malfatti S.A."/>
            <person name="Marx C.J."/>
            <person name="Parnell J.J."/>
            <person name="Ramette A."/>
            <person name="Richardson P."/>
            <person name="Seeger M."/>
            <person name="Smith D."/>
            <person name="Spilker T."/>
            <person name="Sul W.J."/>
            <person name="Tsoi T.V."/>
            <person name="Ulrich L.E."/>
            <person name="Zhulin I.B."/>
            <person name="Tiedje J.M."/>
        </authorList>
    </citation>
    <scope>NUCLEOTIDE SEQUENCE [LARGE SCALE GENOMIC DNA]</scope>
    <source>
        <strain>LB400</strain>
    </source>
</reference>
<name>RL31B_PARXL</name>
<accession>Q13Z86</accession>
<comment type="subunit">
    <text evidence="1">Part of the 50S ribosomal subunit.</text>
</comment>
<comment type="similarity">
    <text evidence="1">Belongs to the bacterial ribosomal protein bL31 family. Type B subfamily.</text>
</comment>
<evidence type="ECO:0000255" key="1">
    <source>
        <dbReference type="HAMAP-Rule" id="MF_00502"/>
    </source>
</evidence>
<evidence type="ECO:0000305" key="2"/>
<proteinExistence type="inferred from homology"/>
<feature type="chain" id="PRO_0000259106" description="Large ribosomal subunit protein bL31B">
    <location>
        <begin position="1"/>
        <end position="88"/>
    </location>
</feature>
<keyword id="KW-1185">Reference proteome</keyword>
<keyword id="KW-0687">Ribonucleoprotein</keyword>
<keyword id="KW-0689">Ribosomal protein</keyword>
<dbReference type="EMBL" id="CP000270">
    <property type="protein sequence ID" value="ABE30603.1"/>
    <property type="molecule type" value="Genomic_DNA"/>
</dbReference>
<dbReference type="RefSeq" id="WP_007182076.1">
    <property type="nucleotide sequence ID" value="NZ_CP008760.1"/>
</dbReference>
<dbReference type="SMR" id="Q13Z86"/>
<dbReference type="STRING" id="266265.Bxe_A2367"/>
<dbReference type="KEGG" id="bxb:DR64_71"/>
<dbReference type="KEGG" id="bxe:Bxe_A2367"/>
<dbReference type="eggNOG" id="COG0254">
    <property type="taxonomic scope" value="Bacteria"/>
</dbReference>
<dbReference type="OrthoDB" id="9803251at2"/>
<dbReference type="Proteomes" id="UP000001817">
    <property type="component" value="Chromosome 1"/>
</dbReference>
<dbReference type="GO" id="GO:1990904">
    <property type="term" value="C:ribonucleoprotein complex"/>
    <property type="evidence" value="ECO:0007669"/>
    <property type="project" value="UniProtKB-KW"/>
</dbReference>
<dbReference type="GO" id="GO:0005840">
    <property type="term" value="C:ribosome"/>
    <property type="evidence" value="ECO:0007669"/>
    <property type="project" value="UniProtKB-KW"/>
</dbReference>
<dbReference type="GO" id="GO:0003735">
    <property type="term" value="F:structural constituent of ribosome"/>
    <property type="evidence" value="ECO:0007669"/>
    <property type="project" value="InterPro"/>
</dbReference>
<dbReference type="GO" id="GO:0006412">
    <property type="term" value="P:translation"/>
    <property type="evidence" value="ECO:0007669"/>
    <property type="project" value="UniProtKB-UniRule"/>
</dbReference>
<dbReference type="Gene3D" id="4.10.830.30">
    <property type="entry name" value="Ribosomal protein L31"/>
    <property type="match status" value="1"/>
</dbReference>
<dbReference type="HAMAP" id="MF_00502">
    <property type="entry name" value="Ribosomal_bL31_2"/>
    <property type="match status" value="1"/>
</dbReference>
<dbReference type="InterPro" id="IPR034704">
    <property type="entry name" value="Ribosomal_bL28/bL31-like_sf"/>
</dbReference>
<dbReference type="InterPro" id="IPR002150">
    <property type="entry name" value="Ribosomal_bL31"/>
</dbReference>
<dbReference type="InterPro" id="IPR027493">
    <property type="entry name" value="Ribosomal_bL31_B"/>
</dbReference>
<dbReference type="InterPro" id="IPR042105">
    <property type="entry name" value="Ribosomal_bL31_sf"/>
</dbReference>
<dbReference type="NCBIfam" id="TIGR00105">
    <property type="entry name" value="L31"/>
    <property type="match status" value="1"/>
</dbReference>
<dbReference type="NCBIfam" id="NF002462">
    <property type="entry name" value="PRK01678.1"/>
    <property type="match status" value="1"/>
</dbReference>
<dbReference type="PANTHER" id="PTHR33280">
    <property type="entry name" value="50S RIBOSOMAL PROTEIN L31, CHLOROPLASTIC"/>
    <property type="match status" value="1"/>
</dbReference>
<dbReference type="PANTHER" id="PTHR33280:SF1">
    <property type="entry name" value="LARGE RIBOSOMAL SUBUNIT PROTEIN BL31C"/>
    <property type="match status" value="1"/>
</dbReference>
<dbReference type="Pfam" id="PF01197">
    <property type="entry name" value="Ribosomal_L31"/>
    <property type="match status" value="1"/>
</dbReference>
<dbReference type="PRINTS" id="PR01249">
    <property type="entry name" value="RIBOSOMALL31"/>
</dbReference>
<dbReference type="SUPFAM" id="SSF143800">
    <property type="entry name" value="L28p-like"/>
    <property type="match status" value="1"/>
</dbReference>
<dbReference type="PROSITE" id="PS01143">
    <property type="entry name" value="RIBOSOMAL_L31"/>
    <property type="match status" value="1"/>
</dbReference>
<organism>
    <name type="scientific">Paraburkholderia xenovorans (strain LB400)</name>
    <dbReference type="NCBI Taxonomy" id="266265"/>
    <lineage>
        <taxon>Bacteria</taxon>
        <taxon>Pseudomonadati</taxon>
        <taxon>Pseudomonadota</taxon>
        <taxon>Betaproteobacteria</taxon>
        <taxon>Burkholderiales</taxon>
        <taxon>Burkholderiaceae</taxon>
        <taxon>Paraburkholderia</taxon>
    </lineage>
</organism>
<gene>
    <name evidence="1" type="primary">rpmE2</name>
    <name type="ordered locus">Bxeno_A2065</name>
    <name type="ORF">Bxe_A2367</name>
</gene>